<comment type="function">
    <text evidence="2">E3 ubiquitin-protein ligase that plays a role in the limitation of the innate immune response. Mediates inhibition of the RLR signaling pathway by ubiquitinating RIGI and IFIH1 receptors, leading to their proteasomal degradation. Also promotes the neddylation of IKBKG/NEMO, stabilizing NFKBIA, and thereby inhibiting of NF-kappa-B nuclear translocation and activation.</text>
</comment>
<comment type="catalytic activity">
    <reaction evidence="2">
        <text>S-ubiquitinyl-[E2 ubiquitin-conjugating enzyme]-L-cysteine + [acceptor protein]-L-lysine = [E2 ubiquitin-conjugating enzyme]-L-cysteine + N(6)-ubiquitinyl-[acceptor protein]-L-lysine.</text>
        <dbReference type="EC" id="2.3.2.27"/>
    </reaction>
</comment>
<comment type="subunit">
    <text evidence="1">Interacts with NEDD8.</text>
</comment>
<comment type="similarity">
    <text evidence="6">Belongs to the TRIM/RBCC family.</text>
</comment>
<evidence type="ECO:0000250" key="1"/>
<evidence type="ECO:0000250" key="2">
    <source>
        <dbReference type="UniProtKB" id="Q6P9F5"/>
    </source>
</evidence>
<evidence type="ECO:0000255" key="3"/>
<evidence type="ECO:0000255" key="4">
    <source>
        <dbReference type="PROSITE-ProRule" id="PRU00024"/>
    </source>
</evidence>
<evidence type="ECO:0000255" key="5">
    <source>
        <dbReference type="PROSITE-ProRule" id="PRU00175"/>
    </source>
</evidence>
<evidence type="ECO:0000305" key="6"/>
<sequence length="247" mass="28389">MVPLDKDNQDICPICLDPLKEAVSTDCRHLFCRMCLIRHMDKASVSGVLSCPVCRKPCSETVLGDNYICHTHQKRVCRFCESSRHLLCEECLQSPEHRAHTELSIENAISHYKERLNRRSRKLRKDLGDLQRLKAQEEKMLQALQVDWGSHRPRTEQQNQDQTELQQKALPRHWLDQREDPPEEVAKVFNFSEAVTQLSILVSSLERMAKELDASTLKDASDLLDRSSQQKLEGLLSHVPPANSKLS</sequence>
<dbReference type="EC" id="2.3.2.27" evidence="2"/>
<dbReference type="EMBL" id="BX883051">
    <property type="protein sequence ID" value="CAE84059.1"/>
    <property type="molecule type" value="Genomic_DNA"/>
</dbReference>
<dbReference type="RefSeq" id="NP_001009175.1">
    <property type="nucleotide sequence ID" value="NM_001009175.2"/>
</dbReference>
<dbReference type="RefSeq" id="XP_063135397.1">
    <property type="nucleotide sequence ID" value="XM_063279327.1"/>
</dbReference>
<dbReference type="SMR" id="Q6MFY8"/>
<dbReference type="FunCoup" id="Q6MFY8">
    <property type="interactions" value="41"/>
</dbReference>
<dbReference type="STRING" id="10116.ENSRNOP00000035419"/>
<dbReference type="CarbonylDB" id="Q6MFY8"/>
<dbReference type="iPTMnet" id="Q6MFY8"/>
<dbReference type="PhosphoSitePlus" id="Q6MFY8"/>
<dbReference type="PaxDb" id="10116-ENSRNOP00000035419"/>
<dbReference type="Ensembl" id="ENSRNOT00000029070.7">
    <property type="protein sequence ID" value="ENSRNOP00000035419.5"/>
    <property type="gene ID" value="ENSRNOG00000000783.8"/>
</dbReference>
<dbReference type="GeneID" id="365528"/>
<dbReference type="KEGG" id="rno:365528"/>
<dbReference type="UCSC" id="RGD:1359645">
    <property type="organism name" value="rat"/>
</dbReference>
<dbReference type="AGR" id="RGD:1359645"/>
<dbReference type="CTD" id="135644"/>
<dbReference type="RGD" id="1359645">
    <property type="gene designation" value="Trim40"/>
</dbReference>
<dbReference type="eggNOG" id="KOG2177">
    <property type="taxonomic scope" value="Eukaryota"/>
</dbReference>
<dbReference type="GeneTree" id="ENSGT00710000106875"/>
<dbReference type="HOGENOM" id="CLU_013137_3_0_1"/>
<dbReference type="InParanoid" id="Q6MFY8"/>
<dbReference type="OMA" id="CLESPEH"/>
<dbReference type="OrthoDB" id="25826at9989"/>
<dbReference type="PhylomeDB" id="Q6MFY8"/>
<dbReference type="PRO" id="PR:Q6MFY8"/>
<dbReference type="Proteomes" id="UP000002494">
    <property type="component" value="Chromosome 20"/>
</dbReference>
<dbReference type="Bgee" id="ENSRNOG00000000783">
    <property type="expression patterns" value="Expressed in jejunum and 5 other cell types or tissues"/>
</dbReference>
<dbReference type="GO" id="GO:0005737">
    <property type="term" value="C:cytoplasm"/>
    <property type="evidence" value="ECO:0000318"/>
    <property type="project" value="GO_Central"/>
</dbReference>
<dbReference type="GO" id="GO:0008385">
    <property type="term" value="C:IkappaB kinase complex"/>
    <property type="evidence" value="ECO:0000266"/>
    <property type="project" value="RGD"/>
</dbReference>
<dbReference type="GO" id="GO:0061630">
    <property type="term" value="F:ubiquitin protein ligase activity"/>
    <property type="evidence" value="ECO:0000318"/>
    <property type="project" value="GO_Central"/>
</dbReference>
<dbReference type="GO" id="GO:0008270">
    <property type="term" value="F:zinc ion binding"/>
    <property type="evidence" value="ECO:0007669"/>
    <property type="project" value="UniProtKB-KW"/>
</dbReference>
<dbReference type="GO" id="GO:0045087">
    <property type="term" value="P:innate immune response"/>
    <property type="evidence" value="ECO:0000318"/>
    <property type="project" value="GO_Central"/>
</dbReference>
<dbReference type="GO" id="GO:0030308">
    <property type="term" value="P:negative regulation of cell growth"/>
    <property type="evidence" value="ECO:0000315"/>
    <property type="project" value="UniProtKB"/>
</dbReference>
<dbReference type="GO" id="GO:0032088">
    <property type="term" value="P:negative regulation of NF-kappaB transcription factor activity"/>
    <property type="evidence" value="ECO:0000315"/>
    <property type="project" value="UniProtKB"/>
</dbReference>
<dbReference type="GO" id="GO:0042177">
    <property type="term" value="P:negative regulation of protein catabolic process"/>
    <property type="evidence" value="ECO:0000266"/>
    <property type="project" value="RGD"/>
</dbReference>
<dbReference type="GO" id="GO:1900181">
    <property type="term" value="P:negative regulation of protein localization to nucleus"/>
    <property type="evidence" value="ECO:0000266"/>
    <property type="project" value="RGD"/>
</dbReference>
<dbReference type="GO" id="GO:0045116">
    <property type="term" value="P:protein neddylation"/>
    <property type="evidence" value="ECO:0000266"/>
    <property type="project" value="RGD"/>
</dbReference>
<dbReference type="CDD" id="cd16583">
    <property type="entry name" value="RING-HC_TRIM40-C-V"/>
    <property type="match status" value="1"/>
</dbReference>
<dbReference type="FunFam" id="3.30.40.10:FF:000775">
    <property type="entry name" value="Tripartite motif-containing protein 40"/>
    <property type="match status" value="1"/>
</dbReference>
<dbReference type="Gene3D" id="3.30.160.60">
    <property type="entry name" value="Classic Zinc Finger"/>
    <property type="match status" value="1"/>
</dbReference>
<dbReference type="Gene3D" id="3.30.40.10">
    <property type="entry name" value="Zinc/RING finger domain, C3HC4 (zinc finger)"/>
    <property type="match status" value="1"/>
</dbReference>
<dbReference type="InterPro" id="IPR050143">
    <property type="entry name" value="TRIM/RBCC"/>
</dbReference>
<dbReference type="InterPro" id="IPR000315">
    <property type="entry name" value="Znf_B-box"/>
</dbReference>
<dbReference type="InterPro" id="IPR018957">
    <property type="entry name" value="Znf_C3HC4_RING-type"/>
</dbReference>
<dbReference type="InterPro" id="IPR001841">
    <property type="entry name" value="Znf_RING"/>
</dbReference>
<dbReference type="InterPro" id="IPR013083">
    <property type="entry name" value="Znf_RING/FYVE/PHD"/>
</dbReference>
<dbReference type="InterPro" id="IPR017907">
    <property type="entry name" value="Znf_RING_CS"/>
</dbReference>
<dbReference type="PANTHER" id="PTHR24103">
    <property type="entry name" value="E3 UBIQUITIN-PROTEIN LIGASE TRIM"/>
    <property type="match status" value="1"/>
</dbReference>
<dbReference type="Pfam" id="PF00097">
    <property type="entry name" value="zf-C3HC4"/>
    <property type="match status" value="1"/>
</dbReference>
<dbReference type="SMART" id="SM00184">
    <property type="entry name" value="RING"/>
    <property type="match status" value="1"/>
</dbReference>
<dbReference type="SUPFAM" id="SSF57845">
    <property type="entry name" value="B-box zinc-binding domain"/>
    <property type="match status" value="1"/>
</dbReference>
<dbReference type="SUPFAM" id="SSF57850">
    <property type="entry name" value="RING/U-box"/>
    <property type="match status" value="1"/>
</dbReference>
<dbReference type="PROSITE" id="PS50119">
    <property type="entry name" value="ZF_BBOX"/>
    <property type="match status" value="1"/>
</dbReference>
<dbReference type="PROSITE" id="PS00518">
    <property type="entry name" value="ZF_RING_1"/>
    <property type="match status" value="1"/>
</dbReference>
<dbReference type="PROSITE" id="PS50089">
    <property type="entry name" value="ZF_RING_2"/>
    <property type="match status" value="1"/>
</dbReference>
<protein>
    <recommendedName>
        <fullName>E3 ubiquitin ligase TRIM40</fullName>
        <ecNumber evidence="2">2.3.2.27</ecNumber>
    </recommendedName>
    <alternativeName>
        <fullName>Probable E3 NEDD8-protein ligase</fullName>
    </alternativeName>
    <alternativeName>
        <fullName>RING finger protein 35</fullName>
    </alternativeName>
</protein>
<feature type="chain" id="PRO_0000056261" description="E3 ubiquitin ligase TRIM40">
    <location>
        <begin position="1"/>
        <end position="247"/>
    </location>
</feature>
<feature type="zinc finger region" description="RING-type" evidence="5">
    <location>
        <begin position="12"/>
        <end position="55"/>
    </location>
</feature>
<feature type="zinc finger region" description="B box-type" evidence="4">
    <location>
        <begin position="64"/>
        <end position="105"/>
    </location>
</feature>
<feature type="coiled-coil region" evidence="3">
    <location>
        <begin position="111"/>
        <end position="148"/>
    </location>
</feature>
<feature type="binding site" evidence="4">
    <location>
        <position position="69"/>
    </location>
    <ligand>
        <name>Zn(2+)</name>
        <dbReference type="ChEBI" id="CHEBI:29105"/>
    </ligand>
</feature>
<feature type="binding site" evidence="4">
    <location>
        <position position="72"/>
    </location>
    <ligand>
        <name>Zn(2+)</name>
        <dbReference type="ChEBI" id="CHEBI:29105"/>
    </ligand>
</feature>
<feature type="binding site" evidence="4">
    <location>
        <position position="91"/>
    </location>
    <ligand>
        <name>Zn(2+)</name>
        <dbReference type="ChEBI" id="CHEBI:29105"/>
    </ligand>
</feature>
<feature type="binding site" evidence="4">
    <location>
        <position position="97"/>
    </location>
    <ligand>
        <name>Zn(2+)</name>
        <dbReference type="ChEBI" id="CHEBI:29105"/>
    </ligand>
</feature>
<accession>Q6MFY8</accession>
<proteinExistence type="inferred from homology"/>
<gene>
    <name type="primary">Trim40</name>
    <name type="synonym">Rnf35</name>
</gene>
<name>TRI40_RAT</name>
<organism>
    <name type="scientific">Rattus norvegicus</name>
    <name type="common">Rat</name>
    <dbReference type="NCBI Taxonomy" id="10116"/>
    <lineage>
        <taxon>Eukaryota</taxon>
        <taxon>Metazoa</taxon>
        <taxon>Chordata</taxon>
        <taxon>Craniata</taxon>
        <taxon>Vertebrata</taxon>
        <taxon>Euteleostomi</taxon>
        <taxon>Mammalia</taxon>
        <taxon>Eutheria</taxon>
        <taxon>Euarchontoglires</taxon>
        <taxon>Glires</taxon>
        <taxon>Rodentia</taxon>
        <taxon>Myomorpha</taxon>
        <taxon>Muroidea</taxon>
        <taxon>Muridae</taxon>
        <taxon>Murinae</taxon>
        <taxon>Rattus</taxon>
    </lineage>
</organism>
<reference key="1">
    <citation type="journal article" date="2004" name="Genome Res.">
        <title>The genomic sequence and comparative analysis of the rat major histocompatibility complex.</title>
        <authorList>
            <person name="Hurt P."/>
            <person name="Walter L."/>
            <person name="Sudbrak R."/>
            <person name="Klages S."/>
            <person name="Mueller I."/>
            <person name="Shiina T."/>
            <person name="Inoko H."/>
            <person name="Lehrach H."/>
            <person name="Guenther E."/>
            <person name="Reinhardt R."/>
            <person name="Himmelbauer H."/>
        </authorList>
    </citation>
    <scope>NUCLEOTIDE SEQUENCE [LARGE SCALE GENOMIC DNA]</scope>
    <source>
        <strain>Brown Norway</strain>
    </source>
</reference>
<keyword id="KW-0175">Coiled coil</keyword>
<keyword id="KW-0479">Metal-binding</keyword>
<keyword id="KW-1185">Reference proteome</keyword>
<keyword id="KW-0808">Transferase</keyword>
<keyword id="KW-0833">Ubl conjugation pathway</keyword>
<keyword id="KW-0862">Zinc</keyword>
<keyword id="KW-0863">Zinc-finger</keyword>